<evidence type="ECO:0000255" key="1">
    <source>
        <dbReference type="HAMAP-Rule" id="MF_02082"/>
    </source>
</evidence>
<evidence type="ECO:0000303" key="2">
    <source>
    </source>
</evidence>
<evidence type="ECO:0000305" key="3">
    <source>
    </source>
</evidence>
<keyword id="KW-0028">Amino-acid biosynthesis</keyword>
<keyword id="KW-0055">Arginine biosynthesis</keyword>
<keyword id="KW-0067">ATP-binding</keyword>
<keyword id="KW-0963">Cytoplasm</keyword>
<keyword id="KW-0418">Kinase</keyword>
<keyword id="KW-0457">Lysine biosynthesis</keyword>
<keyword id="KW-0547">Nucleotide-binding</keyword>
<keyword id="KW-1185">Reference proteome</keyword>
<keyword id="KW-0808">Transferase</keyword>
<gene>
    <name evidence="1 2" type="primary">lysZ</name>
    <name evidence="2" type="synonym">argB</name>
    <name type="ordered locus">SSO0156</name>
</gene>
<accession>Q980X0</accession>
<feature type="chain" id="PRO_0000112704" description="[LysW]-aminoadipate/[LysW]-glutamate kinase">
    <location>
        <begin position="1"/>
        <end position="264"/>
    </location>
</feature>
<feature type="binding site" evidence="1">
    <location>
        <begin position="35"/>
        <end position="36"/>
    </location>
    <ligand>
        <name>substrate</name>
    </ligand>
</feature>
<feature type="binding site" evidence="1">
    <location>
        <position position="62"/>
    </location>
    <ligand>
        <name>substrate</name>
    </ligand>
</feature>
<feature type="binding site" evidence="1">
    <location>
        <position position="167"/>
    </location>
    <ligand>
        <name>substrate</name>
    </ligand>
</feature>
<feature type="site" description="Transition state stabilizer" evidence="1">
    <location>
        <position position="5"/>
    </location>
</feature>
<feature type="site" description="Transition state stabilizer" evidence="1">
    <location>
        <position position="224"/>
    </location>
</feature>
<proteinExistence type="inferred from homology"/>
<name>LYSZ_SACS2</name>
<organism>
    <name type="scientific">Saccharolobus solfataricus (strain ATCC 35092 / DSM 1617 / JCM 11322 / P2)</name>
    <name type="common">Sulfolobus solfataricus</name>
    <dbReference type="NCBI Taxonomy" id="273057"/>
    <lineage>
        <taxon>Archaea</taxon>
        <taxon>Thermoproteota</taxon>
        <taxon>Thermoprotei</taxon>
        <taxon>Sulfolobales</taxon>
        <taxon>Sulfolobaceae</taxon>
        <taxon>Saccharolobus</taxon>
    </lineage>
</organism>
<comment type="function">
    <text evidence="1">Involved in both the arginine and lysine biosynthetic pathways. Phosphorylates the LysW-bound precursors glutamate (for arginine biosynthesis), respectively alpha-aminoadipate (for lysine biosynthesis).</text>
</comment>
<comment type="catalytic activity">
    <reaction evidence="1">
        <text>[amino-group carrier protein]-C-terminal-N-(1,4-dicarboxybutan-1-yl)-L-glutamine + ATP = [amino-group carrier protein]-C-terminal-N-(1-carboxy-5-phosphooxy-5-oxopentan-1-yl)-L-glutamine + ADP</text>
        <dbReference type="Rhea" id="RHEA:41944"/>
        <dbReference type="Rhea" id="RHEA-COMP:9694"/>
        <dbReference type="Rhea" id="RHEA-COMP:9712"/>
        <dbReference type="ChEBI" id="CHEBI:30616"/>
        <dbReference type="ChEBI" id="CHEBI:78499"/>
        <dbReference type="ChEBI" id="CHEBI:78503"/>
        <dbReference type="ChEBI" id="CHEBI:456216"/>
        <dbReference type="EC" id="2.7.2.17"/>
    </reaction>
</comment>
<comment type="catalytic activity">
    <reaction evidence="1">
        <text>[amino-group carrier protein]-C-terminal-gamma-(L-glutamyl)-L-glutamate + ATP = [amino-group carrier protein]-C-terminal-gamma-(5-phospho-L-glutamyl)-L-glutamate + ADP</text>
        <dbReference type="Rhea" id="RHEA:52632"/>
        <dbReference type="Rhea" id="RHEA-COMP:13311"/>
        <dbReference type="Rhea" id="RHEA-COMP:13313"/>
        <dbReference type="ChEBI" id="CHEBI:30616"/>
        <dbReference type="ChEBI" id="CHEBI:136714"/>
        <dbReference type="ChEBI" id="CHEBI:136717"/>
        <dbReference type="ChEBI" id="CHEBI:456216"/>
        <dbReference type="EC" id="2.7.2.19"/>
    </reaction>
</comment>
<comment type="pathway">
    <text evidence="1 3">Amino-acid biosynthesis; L-lysine biosynthesis via AAA pathway; L-lysine from L-alpha-aminoadipate (Thermus route): step 2/5.</text>
</comment>
<comment type="pathway">
    <text evidence="1">Amino-acid biosynthesis; L-arginine biosynthesis.</text>
</comment>
<comment type="subcellular location">
    <subcellularLocation>
        <location evidence="1">Cytoplasm</location>
    </subcellularLocation>
</comment>
<comment type="similarity">
    <text evidence="1">Belongs to the acetylglutamate kinase family. LysZ subfamily.</text>
</comment>
<dbReference type="EC" id="2.7.2.17" evidence="1"/>
<dbReference type="EC" id="2.7.2.19" evidence="1"/>
<dbReference type="EMBL" id="AE006641">
    <property type="protein sequence ID" value="AAK40502.1"/>
    <property type="molecule type" value="Genomic_DNA"/>
</dbReference>
<dbReference type="EMBL" id="BK000545">
    <property type="protein sequence ID" value="DAA00050.1"/>
    <property type="molecule type" value="Genomic_DNA"/>
</dbReference>
<dbReference type="PIR" id="G90155">
    <property type="entry name" value="G90155"/>
</dbReference>
<dbReference type="RefSeq" id="WP_009990381.1">
    <property type="nucleotide sequence ID" value="NC_002754.1"/>
</dbReference>
<dbReference type="SMR" id="Q980X0"/>
<dbReference type="FunCoup" id="Q980X0">
    <property type="interactions" value="145"/>
</dbReference>
<dbReference type="STRING" id="273057.SSO0156"/>
<dbReference type="PaxDb" id="273057-SSO0156"/>
<dbReference type="EnsemblBacteria" id="AAK40502">
    <property type="protein sequence ID" value="AAK40502"/>
    <property type="gene ID" value="SSO0156"/>
</dbReference>
<dbReference type="KEGG" id="sso:SSO0156"/>
<dbReference type="PATRIC" id="fig|273057.12.peg.153"/>
<dbReference type="eggNOG" id="arCOG00862">
    <property type="taxonomic scope" value="Archaea"/>
</dbReference>
<dbReference type="HOGENOM" id="CLU_053680_2_0_2"/>
<dbReference type="InParanoid" id="Q980X0"/>
<dbReference type="PhylomeDB" id="Q980X0"/>
<dbReference type="UniPathway" id="UPA00033">
    <property type="reaction ID" value="UER00036"/>
</dbReference>
<dbReference type="UniPathway" id="UPA00068"/>
<dbReference type="Proteomes" id="UP000001974">
    <property type="component" value="Chromosome"/>
</dbReference>
<dbReference type="GO" id="GO:0005737">
    <property type="term" value="C:cytoplasm"/>
    <property type="evidence" value="ECO:0007669"/>
    <property type="project" value="UniProtKB-SubCell"/>
</dbReference>
<dbReference type="GO" id="GO:0003991">
    <property type="term" value="F:acetylglutamate kinase activity"/>
    <property type="evidence" value="ECO:0000318"/>
    <property type="project" value="GO_Central"/>
</dbReference>
<dbReference type="GO" id="GO:0005524">
    <property type="term" value="F:ATP binding"/>
    <property type="evidence" value="ECO:0007669"/>
    <property type="project" value="UniProtKB-KW"/>
</dbReference>
<dbReference type="GO" id="GO:0043744">
    <property type="term" value="F:N2-acetyl-L-aminoadipate kinase activity"/>
    <property type="evidence" value="ECO:0007669"/>
    <property type="project" value="RHEA"/>
</dbReference>
<dbReference type="GO" id="GO:0042450">
    <property type="term" value="P:arginine biosynthetic process via ornithine"/>
    <property type="evidence" value="ECO:0007669"/>
    <property type="project" value="UniProtKB-UniRule"/>
</dbReference>
<dbReference type="GO" id="GO:0006526">
    <property type="term" value="P:L-arginine biosynthetic process"/>
    <property type="evidence" value="ECO:0000318"/>
    <property type="project" value="GO_Central"/>
</dbReference>
<dbReference type="GO" id="GO:0019878">
    <property type="term" value="P:lysine biosynthetic process via aminoadipic acid"/>
    <property type="evidence" value="ECO:0007669"/>
    <property type="project" value="UniProtKB-UniRule"/>
</dbReference>
<dbReference type="CDD" id="cd04251">
    <property type="entry name" value="AAK_NAGK-UC"/>
    <property type="match status" value="1"/>
</dbReference>
<dbReference type="Gene3D" id="3.40.1160.10">
    <property type="entry name" value="Acetylglutamate kinase-like"/>
    <property type="match status" value="1"/>
</dbReference>
<dbReference type="HAMAP" id="MF_02082">
    <property type="entry name" value="LysZ"/>
    <property type="match status" value="1"/>
</dbReference>
<dbReference type="InterPro" id="IPR036393">
    <property type="entry name" value="AceGlu_kinase-like_sf"/>
</dbReference>
<dbReference type="InterPro" id="IPR004662">
    <property type="entry name" value="AcgluKinase_fam"/>
</dbReference>
<dbReference type="InterPro" id="IPR001048">
    <property type="entry name" value="Asp/Glu/Uridylate_kinase"/>
</dbReference>
<dbReference type="InterPro" id="IPR037529">
    <property type="entry name" value="LysZ"/>
</dbReference>
<dbReference type="NCBIfam" id="TIGR00761">
    <property type="entry name" value="argB"/>
    <property type="match status" value="1"/>
</dbReference>
<dbReference type="NCBIfam" id="NF010662">
    <property type="entry name" value="PRK14058.1-4"/>
    <property type="match status" value="1"/>
</dbReference>
<dbReference type="PANTHER" id="PTHR23342">
    <property type="entry name" value="N-ACETYLGLUTAMATE SYNTHASE"/>
    <property type="match status" value="1"/>
</dbReference>
<dbReference type="PANTHER" id="PTHR23342:SF0">
    <property type="entry name" value="N-ACETYLGLUTAMATE SYNTHASE, MITOCHONDRIAL"/>
    <property type="match status" value="1"/>
</dbReference>
<dbReference type="Pfam" id="PF00696">
    <property type="entry name" value="AA_kinase"/>
    <property type="match status" value="1"/>
</dbReference>
<dbReference type="PIRSF" id="PIRSF000728">
    <property type="entry name" value="NAGK"/>
    <property type="match status" value="1"/>
</dbReference>
<dbReference type="SUPFAM" id="SSF53633">
    <property type="entry name" value="Carbamate kinase-like"/>
    <property type="match status" value="1"/>
</dbReference>
<sequence>MIVVKIGGRVVKNSLDKIILDILNINDKVILVHGGGDIVTDYTKRLGIEPVFVTSPEGIRSRYTTKEELEVYIMAMSLINKSITSKLCSLGKNAIGITGVDGGLLLAERKKRIVVIDERGKKRIIEGGYTGKVKEVRSEIINHLVKLFDIIVVSPIALDVEERTPLNIDGDQAAFAISKALRANVLILLSDVEGVLVEGKVINRLTPSEAKELSKKIGPGMNRKLLMAAESVENGVNKVIIGSGVKDRPIINALELNGTVIANG</sequence>
<reference key="1">
    <citation type="journal article" date="2001" name="Proc. Natl. Acad. Sci. U.S.A.">
        <title>The complete genome of the crenarchaeon Sulfolobus solfataricus P2.</title>
        <authorList>
            <person name="She Q."/>
            <person name="Singh R.K."/>
            <person name="Confalonieri F."/>
            <person name="Zivanovic Y."/>
            <person name="Allard G."/>
            <person name="Awayez M.J."/>
            <person name="Chan-Weiher C.C.-Y."/>
            <person name="Clausen I.G."/>
            <person name="Curtis B.A."/>
            <person name="De Moors A."/>
            <person name="Erauso G."/>
            <person name="Fletcher C."/>
            <person name="Gordon P.M.K."/>
            <person name="Heikamp-de Jong I."/>
            <person name="Jeffries A.C."/>
            <person name="Kozera C.J."/>
            <person name="Medina N."/>
            <person name="Peng X."/>
            <person name="Thi-Ngoc H.P."/>
            <person name="Redder P."/>
            <person name="Schenk M.E."/>
            <person name="Theriault C."/>
            <person name="Tolstrup N."/>
            <person name="Charlebois R.L."/>
            <person name="Doolittle W.F."/>
            <person name="Duguet M."/>
            <person name="Gaasterland T."/>
            <person name="Garrett R.A."/>
            <person name="Ragan M.A."/>
            <person name="Sensen C.W."/>
            <person name="Van der Oost J."/>
        </authorList>
    </citation>
    <scope>NUCLEOTIDE SEQUENCE [LARGE SCALE GENOMIC DNA]</scope>
    <source>
        <strain>ATCC 35092 / DSM 1617 / JCM 11322 / P2</strain>
    </source>
</reference>
<reference key="2">
    <citation type="journal article" date="2002" name="J. Biol. Chem.">
        <title>The Sulfolobus solfataricus Lrp-like protein LysM regulates lysine biosynthesis in response to lysine availability.</title>
        <authorList>
            <person name="Brinkman A.B."/>
            <person name="Bell S.D."/>
            <person name="Lebbink R.J."/>
            <person name="de Vos W.M."/>
            <person name="van der Oost J."/>
        </authorList>
    </citation>
    <scope>INVOLVEMENT IN LYSINE BIOSYNTHESIS</scope>
    <source>
        <strain>ATCC 35092 / DSM 1617 / JCM 11322 / P2</strain>
    </source>
</reference>
<protein>
    <recommendedName>
        <fullName evidence="1">[LysW]-aminoadipate/[LysW]-glutamate kinase</fullName>
        <ecNumber evidence="1">2.7.2.17</ecNumber>
        <ecNumber evidence="1">2.7.2.19</ecNumber>
    </recommendedName>
</protein>